<keyword id="KW-0119">Carbohydrate metabolism</keyword>
<keyword id="KW-0963">Cytoplasm</keyword>
<keyword id="KW-0413">Isomerase</keyword>
<keyword id="KW-0460">Magnesium</keyword>
<keyword id="KW-0479">Metal-binding</keyword>
<keyword id="KW-0859">Xylose metabolism</keyword>
<sequence>MAQSHSSSVNYFGSVNKVVFEGKASTNPLAFKYYNPQEVIGGKTMKEHLRFSIAYWHTFTADGTDVFGAATMQRPWDHYKGMDLARARVEAAFEMFEKLDAPFFAFHDRDIAPEGSTLKETNQNLDIIVGMIKDYMRDSNVKLLWNTANMFTNPRFVHGAATSCNADVFAYAAAQVKKGLETAKELGAENYVFWGGREGYETLLNTDLKFELDNLARFMHMAVDYAKEIEYTGQFLIEPKPKEPTTHQYDTDAATTIAFLKQYGLDNHFKLNLEANHATLAGHTFEHELRMARVHGLLGSVDANQGHPLLGWDTDEFPTDLYSTTLAMYEILQNGGLGSGGLNFDAKVRRSSFEPDDLVYAHIAGMDAFARGLKVAHKLIEDRVFEDVIQHRYRSFTEGIGLEITEGRANFHTLEQYALNNKTIKNESGRQERLKAILNQYILEV</sequence>
<proteinExistence type="inferred from homology"/>
<organism>
    <name type="scientific">Bacillus spizizenii (strain ATCC 23059 / NRRL B-14472 / W23)</name>
    <name type="common">Bacillus subtilis subsp. spizizenii</name>
    <dbReference type="NCBI Taxonomy" id="655816"/>
    <lineage>
        <taxon>Bacteria</taxon>
        <taxon>Bacillati</taxon>
        <taxon>Bacillota</taxon>
        <taxon>Bacilli</taxon>
        <taxon>Bacillales</taxon>
        <taxon>Bacillaceae</taxon>
        <taxon>Bacillus</taxon>
    </lineage>
</organism>
<comment type="catalytic activity">
    <reaction>
        <text>alpha-D-xylose = alpha-D-xylulofuranose</text>
        <dbReference type="Rhea" id="RHEA:22816"/>
        <dbReference type="ChEBI" id="CHEBI:28518"/>
        <dbReference type="ChEBI" id="CHEBI:188998"/>
        <dbReference type="EC" id="5.3.1.5"/>
    </reaction>
</comment>
<comment type="cofactor">
    <cofactor evidence="1">
        <name>Mg(2+)</name>
        <dbReference type="ChEBI" id="CHEBI:18420"/>
    </cofactor>
    <text evidence="1">Binds 2 magnesium ions per subunit.</text>
</comment>
<comment type="subunit">
    <text evidence="1">Homotetramer.</text>
</comment>
<comment type="subcellular location">
    <subcellularLocation>
        <location evidence="1">Cytoplasm</location>
    </subcellularLocation>
</comment>
<comment type="similarity">
    <text evidence="2">Belongs to the xylose isomerase family.</text>
</comment>
<accession>E0TVS5</accession>
<accession>P04788</accession>
<accession>P94491</accession>
<feature type="chain" id="PRO_0000403666" description="Xylose isomerase">
    <location>
        <begin position="1"/>
        <end position="445"/>
    </location>
</feature>
<feature type="active site" evidence="1">
    <location>
        <position position="107"/>
    </location>
</feature>
<feature type="active site" evidence="1">
    <location>
        <position position="110"/>
    </location>
</feature>
<feature type="binding site" evidence="1">
    <location>
        <position position="238"/>
    </location>
    <ligand>
        <name>Mg(2+)</name>
        <dbReference type="ChEBI" id="CHEBI:18420"/>
        <label>1</label>
    </ligand>
</feature>
<feature type="binding site" evidence="1">
    <location>
        <position position="274"/>
    </location>
    <ligand>
        <name>Mg(2+)</name>
        <dbReference type="ChEBI" id="CHEBI:18420"/>
        <label>1</label>
    </ligand>
</feature>
<feature type="binding site" evidence="1">
    <location>
        <position position="274"/>
    </location>
    <ligand>
        <name>Mg(2+)</name>
        <dbReference type="ChEBI" id="CHEBI:18420"/>
        <label>2</label>
    </ligand>
</feature>
<feature type="binding site" evidence="1">
    <location>
        <position position="277"/>
    </location>
    <ligand>
        <name>Mg(2+)</name>
        <dbReference type="ChEBI" id="CHEBI:18420"/>
        <label>2</label>
    </ligand>
</feature>
<feature type="binding site" evidence="1">
    <location>
        <position position="302"/>
    </location>
    <ligand>
        <name>Mg(2+)</name>
        <dbReference type="ChEBI" id="CHEBI:18420"/>
        <label>1</label>
    </ligand>
</feature>
<feature type="binding site" evidence="1">
    <location>
        <position position="313"/>
    </location>
    <ligand>
        <name>Mg(2+)</name>
        <dbReference type="ChEBI" id="CHEBI:18420"/>
        <label>2</label>
    </ligand>
</feature>
<feature type="binding site" evidence="1">
    <location>
        <position position="315"/>
    </location>
    <ligand>
        <name>Mg(2+)</name>
        <dbReference type="ChEBI" id="CHEBI:18420"/>
        <label>2</label>
    </ligand>
</feature>
<feature type="binding site" evidence="1">
    <location>
        <position position="345"/>
    </location>
    <ligand>
        <name>Mg(2+)</name>
        <dbReference type="ChEBI" id="CHEBI:18420"/>
        <label>1</label>
    </ligand>
</feature>
<protein>
    <recommendedName>
        <fullName>Xylose isomerase</fullName>
        <ecNumber>5.3.1.5</ecNumber>
    </recommendedName>
</protein>
<name>XYLA_BACSH</name>
<gene>
    <name type="primary">xylA</name>
    <name type="ordered locus">BSUW23_09025</name>
</gene>
<evidence type="ECO:0000250" key="1"/>
<evidence type="ECO:0000305" key="2"/>
<reference key="1">
    <citation type="journal article" date="2011" name="Microbiology">
        <title>The genome sequence of Bacillus subtilis subsp. spizizenii W23: insights into speciation within the B. subtilis complex and into the history of B. subtilis genetics.</title>
        <authorList>
            <person name="Zeigler D.R."/>
        </authorList>
    </citation>
    <scope>NUCLEOTIDE SEQUENCE [LARGE SCALE GENOMIC DNA]</scope>
    <source>
        <strain>ATCC 23059 / NRRL B-14472 / W23</strain>
    </source>
</reference>
<reference key="2">
    <citation type="journal article" date="1984" name="EMBO J.">
        <title>Selective cloning of Bacillus subtilis xylose isomerase and xylulokinase in Escherichia coli genes by IS5-mediated expression.</title>
        <authorList>
            <person name="Wilhelm M."/>
            <person name="Hollenberg C.P."/>
        </authorList>
    </citation>
    <scope>NUCLEOTIDE SEQUENCE [GENOMIC DNA] OF 1-118</scope>
    <source>
        <strain>ATCC 23059 / NRRL B-14472 / W23</strain>
    </source>
</reference>
<dbReference type="EC" id="5.3.1.5"/>
<dbReference type="EMBL" id="CP002183">
    <property type="protein sequence ID" value="ADM37851.1"/>
    <property type="molecule type" value="Genomic_DNA"/>
</dbReference>
<dbReference type="SMR" id="E0TVS5"/>
<dbReference type="KEGG" id="bss:BSUW23_09025"/>
<dbReference type="HOGENOM" id="CLU_037261_1_0_9"/>
<dbReference type="Proteomes" id="UP000002233">
    <property type="component" value="Chromosome"/>
</dbReference>
<dbReference type="GO" id="GO:0005737">
    <property type="term" value="C:cytoplasm"/>
    <property type="evidence" value="ECO:0007669"/>
    <property type="project" value="UniProtKB-SubCell"/>
</dbReference>
<dbReference type="GO" id="GO:0000287">
    <property type="term" value="F:magnesium ion binding"/>
    <property type="evidence" value="ECO:0007669"/>
    <property type="project" value="UniProtKB-UniRule"/>
</dbReference>
<dbReference type="GO" id="GO:0009045">
    <property type="term" value="F:xylose isomerase activity"/>
    <property type="evidence" value="ECO:0007669"/>
    <property type="project" value="UniProtKB-UniRule"/>
</dbReference>
<dbReference type="GO" id="GO:0042732">
    <property type="term" value="P:D-xylose metabolic process"/>
    <property type="evidence" value="ECO:0007669"/>
    <property type="project" value="UniProtKB-UniRule"/>
</dbReference>
<dbReference type="FunFam" id="3.20.20.150:FF:000002">
    <property type="entry name" value="Xylose isomerase"/>
    <property type="match status" value="1"/>
</dbReference>
<dbReference type="Gene3D" id="3.20.20.150">
    <property type="entry name" value="Divalent-metal-dependent TIM barrel enzymes"/>
    <property type="match status" value="1"/>
</dbReference>
<dbReference type="HAMAP" id="MF_00455">
    <property type="entry name" value="Xylose_isom_A"/>
    <property type="match status" value="1"/>
</dbReference>
<dbReference type="InterPro" id="IPR036237">
    <property type="entry name" value="Xyl_isomerase-like_sf"/>
</dbReference>
<dbReference type="InterPro" id="IPR013452">
    <property type="entry name" value="Xylose_isom_bac"/>
</dbReference>
<dbReference type="InterPro" id="IPR001998">
    <property type="entry name" value="Xylose_isomerase"/>
</dbReference>
<dbReference type="NCBIfam" id="NF003998">
    <property type="entry name" value="PRK05474.1"/>
    <property type="match status" value="1"/>
</dbReference>
<dbReference type="NCBIfam" id="TIGR02630">
    <property type="entry name" value="xylose_isom_A"/>
    <property type="match status" value="1"/>
</dbReference>
<dbReference type="PANTHER" id="PTHR48408">
    <property type="match status" value="1"/>
</dbReference>
<dbReference type="PANTHER" id="PTHR48408:SF1">
    <property type="entry name" value="XYLOSE ISOMERASE"/>
    <property type="match status" value="1"/>
</dbReference>
<dbReference type="PRINTS" id="PR00688">
    <property type="entry name" value="XYLOSISMRASE"/>
</dbReference>
<dbReference type="SUPFAM" id="SSF51658">
    <property type="entry name" value="Xylose isomerase-like"/>
    <property type="match status" value="1"/>
</dbReference>
<dbReference type="PROSITE" id="PS51415">
    <property type="entry name" value="XYLOSE_ISOMERASE"/>
    <property type="match status" value="1"/>
</dbReference>